<dbReference type="PIR" id="A01687">
    <property type="entry name" value="N1EP1J"/>
</dbReference>
<dbReference type="SMR" id="P01417"/>
<dbReference type="GO" id="GO:0005576">
    <property type="term" value="C:extracellular region"/>
    <property type="evidence" value="ECO:0007669"/>
    <property type="project" value="UniProtKB-SubCell"/>
</dbReference>
<dbReference type="GO" id="GO:0030550">
    <property type="term" value="F:acetylcholine receptor inhibitor activity"/>
    <property type="evidence" value="ECO:0007669"/>
    <property type="project" value="UniProtKB-KW"/>
</dbReference>
<dbReference type="GO" id="GO:0099106">
    <property type="term" value="F:ion channel regulator activity"/>
    <property type="evidence" value="ECO:0007669"/>
    <property type="project" value="UniProtKB-KW"/>
</dbReference>
<dbReference type="GO" id="GO:0090729">
    <property type="term" value="F:toxin activity"/>
    <property type="evidence" value="ECO:0007669"/>
    <property type="project" value="UniProtKB-KW"/>
</dbReference>
<dbReference type="CDD" id="cd00206">
    <property type="entry name" value="TFP_snake_toxin"/>
    <property type="match status" value="1"/>
</dbReference>
<dbReference type="FunFam" id="2.10.60.10:FF:000024">
    <property type="entry name" value="Cytotoxin 1"/>
    <property type="match status" value="1"/>
</dbReference>
<dbReference type="Gene3D" id="2.10.60.10">
    <property type="entry name" value="CD59"/>
    <property type="match status" value="1"/>
</dbReference>
<dbReference type="InterPro" id="IPR003571">
    <property type="entry name" value="Snake_3FTx"/>
</dbReference>
<dbReference type="InterPro" id="IPR045860">
    <property type="entry name" value="Snake_toxin-like_sf"/>
</dbReference>
<dbReference type="InterPro" id="IPR018354">
    <property type="entry name" value="Snake_toxin_con_site"/>
</dbReference>
<dbReference type="InterPro" id="IPR054131">
    <property type="entry name" value="Toxin_cobra-type"/>
</dbReference>
<dbReference type="Pfam" id="PF21947">
    <property type="entry name" value="Toxin_cobra-type"/>
    <property type="match status" value="1"/>
</dbReference>
<dbReference type="SUPFAM" id="SSF57302">
    <property type="entry name" value="Snake toxin-like"/>
    <property type="match status" value="1"/>
</dbReference>
<dbReference type="PROSITE" id="PS00272">
    <property type="entry name" value="SNAKE_TOXIN"/>
    <property type="match status" value="1"/>
</dbReference>
<proteinExistence type="evidence at protein level"/>
<name>3S11_DENJA</name>
<evidence type="ECO:0000250" key="1">
    <source>
        <dbReference type="UniProtKB" id="P0C1Z0"/>
    </source>
</evidence>
<evidence type="ECO:0000250" key="2">
    <source>
        <dbReference type="UniProtKB" id="P60775"/>
    </source>
</evidence>
<evidence type="ECO:0000269" key="3">
    <source>
    </source>
</evidence>
<evidence type="ECO:0000305" key="4"/>
<protein>
    <recommendedName>
        <fullName>Short neurotoxin 1</fullName>
    </recommendedName>
</protein>
<reference key="1">
    <citation type="journal article" date="1973" name="Biochim. Biophys. Acta">
        <title>Snake venom toxins. The amino acid sequences of two toxins from Dendroaspis jamesoni kaimosae (Jameson's mamba) venom.</title>
        <authorList>
            <person name="Strydom A.J.C."/>
        </authorList>
    </citation>
    <scope>PROTEIN SEQUENCE</scope>
    <scope>TOXIC DOSE</scope>
    <scope>SUBCELLULAR LOCATION</scope>
    <source>
        <tissue>Venom</tissue>
    </source>
</reference>
<organism>
    <name type="scientific">Dendroaspis jamesoni kaimosae</name>
    <name type="common">Eastern Jameson's mamba</name>
    <dbReference type="NCBI Taxonomy" id="8619"/>
    <lineage>
        <taxon>Eukaryota</taxon>
        <taxon>Metazoa</taxon>
        <taxon>Chordata</taxon>
        <taxon>Craniata</taxon>
        <taxon>Vertebrata</taxon>
        <taxon>Euteleostomi</taxon>
        <taxon>Lepidosauria</taxon>
        <taxon>Squamata</taxon>
        <taxon>Bifurcata</taxon>
        <taxon>Unidentata</taxon>
        <taxon>Episquamata</taxon>
        <taxon>Toxicofera</taxon>
        <taxon>Serpentes</taxon>
        <taxon>Colubroidea</taxon>
        <taxon>Elapidae</taxon>
        <taxon>Elapinae</taxon>
        <taxon>Dendroaspis</taxon>
    </lineage>
</organism>
<sequence>RICYNHQSTTPATTKSCGENSCYKKTWSDHRGTIIERGCGCPKVKQGIHLHCCQSDKCNN</sequence>
<comment type="function">
    <text evidence="2">Binds to muscle nicotinic acetylcholine receptor (nAChR) and inhibit acetylcholine from binding to the receptor, thereby impairing neuromuscular transmission.</text>
</comment>
<comment type="subcellular location">
    <subcellularLocation>
        <location evidence="3">Secreted</location>
    </subcellularLocation>
</comment>
<comment type="tissue specificity">
    <text evidence="4">Expressed by the venom gland.</text>
</comment>
<comment type="toxic dose">
    <text evidence="3">LD(50) is 0.11 mg/kg by subcutaneous injection.</text>
</comment>
<comment type="similarity">
    <text evidence="4">Belongs to the three-finger toxin family. Short-chain subfamily. Type I alpha-neurotoxin sub-subfamily.</text>
</comment>
<accession>P01417</accession>
<keyword id="KW-0008">Acetylcholine receptor inhibiting toxin</keyword>
<keyword id="KW-0903">Direct protein sequencing</keyword>
<keyword id="KW-1015">Disulfide bond</keyword>
<keyword id="KW-0872">Ion channel impairing toxin</keyword>
<keyword id="KW-0528">Neurotoxin</keyword>
<keyword id="KW-0629">Postsynaptic neurotoxin</keyword>
<keyword id="KW-0964">Secreted</keyword>
<keyword id="KW-0800">Toxin</keyword>
<feature type="chain" id="PRO_0000093573" description="Short neurotoxin 1" evidence="3">
    <location>
        <begin position="1"/>
        <end position="60"/>
    </location>
</feature>
<feature type="disulfide bond" evidence="1">
    <location>
        <begin position="3"/>
        <end position="22"/>
    </location>
</feature>
<feature type="disulfide bond" evidence="1">
    <location>
        <begin position="17"/>
        <end position="39"/>
    </location>
</feature>
<feature type="disulfide bond" evidence="1">
    <location>
        <begin position="41"/>
        <end position="52"/>
    </location>
</feature>
<feature type="disulfide bond" evidence="1">
    <location>
        <begin position="53"/>
        <end position="58"/>
    </location>
</feature>